<keyword id="KW-0963">Cytoplasm</keyword>
<keyword id="KW-0396">Initiation factor</keyword>
<keyword id="KW-0648">Protein biosynthesis</keyword>
<keyword id="KW-1185">Reference proteome</keyword>
<accession>B2IY66</accession>
<protein>
    <recommendedName>
        <fullName evidence="1">Translation initiation factor IF-3</fullName>
    </recommendedName>
</protein>
<comment type="function">
    <text evidence="1">IF-3 binds to the 30S ribosomal subunit and shifts the equilibrium between 70S ribosomes and their 50S and 30S subunits in favor of the free subunits, thus enhancing the availability of 30S subunits on which protein synthesis initiation begins.</text>
</comment>
<comment type="subunit">
    <text evidence="1">Monomer.</text>
</comment>
<comment type="subcellular location">
    <subcellularLocation>
        <location evidence="1">Cytoplasm</location>
    </subcellularLocation>
</comment>
<comment type="similarity">
    <text evidence="1">Belongs to the IF-3 family.</text>
</comment>
<evidence type="ECO:0000255" key="1">
    <source>
        <dbReference type="HAMAP-Rule" id="MF_00080"/>
    </source>
</evidence>
<gene>
    <name evidence="1" type="primary">infC</name>
    <name type="ordered locus">Npun_F6393</name>
</gene>
<reference key="1">
    <citation type="journal article" date="2013" name="Plant Physiol.">
        <title>A Nostoc punctiforme Sugar Transporter Necessary to Establish a Cyanobacterium-Plant Symbiosis.</title>
        <authorList>
            <person name="Ekman M."/>
            <person name="Picossi S."/>
            <person name="Campbell E.L."/>
            <person name="Meeks J.C."/>
            <person name="Flores E."/>
        </authorList>
    </citation>
    <scope>NUCLEOTIDE SEQUENCE [LARGE SCALE GENOMIC DNA]</scope>
    <source>
        <strain>ATCC 29133 / PCC 73102</strain>
    </source>
</reference>
<feature type="chain" id="PRO_1000092777" description="Translation initiation factor IF-3">
    <location>
        <begin position="1"/>
        <end position="177"/>
    </location>
</feature>
<name>IF3_NOSP7</name>
<proteinExistence type="inferred from homology"/>
<sequence length="177" mass="20762">MPVIEKKRTRDLPQINERIRFPKIRVIDTDGAQLGIMPPQEALQLAEEKELDLVLISDKADPPVCRIMDYGKYKFEQEKKAREARKKQHTADVKEVKMRYKIEEHDYNVRVKQAERFLKDGDKVKATVMFRGREIQHSDLAEDLLKRMATDLEPFGELQQAPKKEGRNMMMLISPKK</sequence>
<organism>
    <name type="scientific">Nostoc punctiforme (strain ATCC 29133 / PCC 73102)</name>
    <dbReference type="NCBI Taxonomy" id="63737"/>
    <lineage>
        <taxon>Bacteria</taxon>
        <taxon>Bacillati</taxon>
        <taxon>Cyanobacteriota</taxon>
        <taxon>Cyanophyceae</taxon>
        <taxon>Nostocales</taxon>
        <taxon>Nostocaceae</taxon>
        <taxon>Nostoc</taxon>
    </lineage>
</organism>
<dbReference type="EMBL" id="CP001037">
    <property type="protein sequence ID" value="ACC84665.1"/>
    <property type="molecule type" value="Genomic_DNA"/>
</dbReference>
<dbReference type="RefSeq" id="WP_012412604.1">
    <property type="nucleotide sequence ID" value="NC_010628.1"/>
</dbReference>
<dbReference type="SMR" id="B2IY66"/>
<dbReference type="STRING" id="63737.Npun_F6393"/>
<dbReference type="EnsemblBacteria" id="ACC84665">
    <property type="protein sequence ID" value="ACC84665"/>
    <property type="gene ID" value="Npun_F6393"/>
</dbReference>
<dbReference type="KEGG" id="npu:Npun_F6393"/>
<dbReference type="eggNOG" id="COG0290">
    <property type="taxonomic scope" value="Bacteria"/>
</dbReference>
<dbReference type="HOGENOM" id="CLU_054919_3_1_3"/>
<dbReference type="OrthoDB" id="9806014at2"/>
<dbReference type="PhylomeDB" id="B2IY66"/>
<dbReference type="Proteomes" id="UP000001191">
    <property type="component" value="Chromosome"/>
</dbReference>
<dbReference type="GO" id="GO:0005829">
    <property type="term" value="C:cytosol"/>
    <property type="evidence" value="ECO:0007669"/>
    <property type="project" value="TreeGrafter"/>
</dbReference>
<dbReference type="GO" id="GO:0016020">
    <property type="term" value="C:membrane"/>
    <property type="evidence" value="ECO:0007669"/>
    <property type="project" value="TreeGrafter"/>
</dbReference>
<dbReference type="GO" id="GO:0043022">
    <property type="term" value="F:ribosome binding"/>
    <property type="evidence" value="ECO:0007669"/>
    <property type="project" value="TreeGrafter"/>
</dbReference>
<dbReference type="GO" id="GO:0003743">
    <property type="term" value="F:translation initiation factor activity"/>
    <property type="evidence" value="ECO:0007669"/>
    <property type="project" value="UniProtKB-UniRule"/>
</dbReference>
<dbReference type="GO" id="GO:0032790">
    <property type="term" value="P:ribosome disassembly"/>
    <property type="evidence" value="ECO:0007669"/>
    <property type="project" value="TreeGrafter"/>
</dbReference>
<dbReference type="FunFam" id="3.10.20.80:FF:000001">
    <property type="entry name" value="Translation initiation factor IF-3"/>
    <property type="match status" value="1"/>
</dbReference>
<dbReference type="FunFam" id="3.30.110.10:FF:000001">
    <property type="entry name" value="Translation initiation factor IF-3"/>
    <property type="match status" value="1"/>
</dbReference>
<dbReference type="Gene3D" id="3.30.110.10">
    <property type="entry name" value="Translation initiation factor 3 (IF-3), C-terminal domain"/>
    <property type="match status" value="1"/>
</dbReference>
<dbReference type="Gene3D" id="3.10.20.80">
    <property type="entry name" value="Translation initiation factor 3 (IF-3), N-terminal domain"/>
    <property type="match status" value="1"/>
</dbReference>
<dbReference type="HAMAP" id="MF_00080">
    <property type="entry name" value="IF_3"/>
    <property type="match status" value="1"/>
</dbReference>
<dbReference type="InterPro" id="IPR036788">
    <property type="entry name" value="T_IF-3_C_sf"/>
</dbReference>
<dbReference type="InterPro" id="IPR036787">
    <property type="entry name" value="T_IF-3_N_sf"/>
</dbReference>
<dbReference type="InterPro" id="IPR019813">
    <property type="entry name" value="Translation_initiation_fac3_CS"/>
</dbReference>
<dbReference type="InterPro" id="IPR001288">
    <property type="entry name" value="Translation_initiation_fac_3"/>
</dbReference>
<dbReference type="InterPro" id="IPR019815">
    <property type="entry name" value="Translation_initiation_fac_3_C"/>
</dbReference>
<dbReference type="InterPro" id="IPR019814">
    <property type="entry name" value="Translation_initiation_fac_3_N"/>
</dbReference>
<dbReference type="NCBIfam" id="TIGR00168">
    <property type="entry name" value="infC"/>
    <property type="match status" value="1"/>
</dbReference>
<dbReference type="PANTHER" id="PTHR10938">
    <property type="entry name" value="TRANSLATION INITIATION FACTOR IF-3"/>
    <property type="match status" value="1"/>
</dbReference>
<dbReference type="PANTHER" id="PTHR10938:SF0">
    <property type="entry name" value="TRANSLATION INITIATION FACTOR IF-3, MITOCHONDRIAL"/>
    <property type="match status" value="1"/>
</dbReference>
<dbReference type="Pfam" id="PF00707">
    <property type="entry name" value="IF3_C"/>
    <property type="match status" value="1"/>
</dbReference>
<dbReference type="Pfam" id="PF05198">
    <property type="entry name" value="IF3_N"/>
    <property type="match status" value="1"/>
</dbReference>
<dbReference type="SUPFAM" id="SSF55200">
    <property type="entry name" value="Translation initiation factor IF3, C-terminal domain"/>
    <property type="match status" value="1"/>
</dbReference>
<dbReference type="SUPFAM" id="SSF54364">
    <property type="entry name" value="Translation initiation factor IF3, N-terminal domain"/>
    <property type="match status" value="1"/>
</dbReference>
<dbReference type="PROSITE" id="PS00938">
    <property type="entry name" value="IF3"/>
    <property type="match status" value="1"/>
</dbReference>